<comment type="subunit">
    <text evidence="1">Part of the 50S ribosomal subunit.</text>
</comment>
<comment type="similarity">
    <text evidence="2">Belongs to the universal ribosomal protein uL29 family.</text>
</comment>
<keyword id="KW-0002">3D-structure</keyword>
<keyword id="KW-1185">Reference proteome</keyword>
<keyword id="KW-0687">Ribonucleoprotein</keyword>
<keyword id="KW-0689">Ribosomal protein</keyword>
<name>RL29_BACSU</name>
<gene>
    <name type="primary">rpmC</name>
    <name type="ordered locus">BSU01240</name>
</gene>
<protein>
    <recommendedName>
        <fullName evidence="2">Large ribosomal subunit protein uL29</fullName>
    </recommendedName>
    <alternativeName>
        <fullName>50S ribosomal protein L29</fullName>
    </alternativeName>
</protein>
<reference key="1">
    <citation type="journal article" date="1989" name="Nucleic Acids Res.">
        <title>Cloning and analysis of the spc ribosomal protein operon of Bacillus subtilis: comparison with the spc operon of Escherichia coli.</title>
        <authorList>
            <person name="Henkin T.M."/>
            <person name="Moon S.H."/>
            <person name="Mattheakis L.C."/>
            <person name="Nomura M."/>
        </authorList>
    </citation>
    <scope>NUCLEOTIDE SEQUENCE [GENOMIC DNA]</scope>
    <source>
        <strain>168</strain>
    </source>
</reference>
<reference key="2">
    <citation type="journal article" date="1996" name="Gene">
        <title>Genetic and transcriptional organization of the Bacillus subtilis spc-alpha region.</title>
        <authorList>
            <person name="Suh J.-W."/>
            <person name="Boylan S.A."/>
            <person name="Oh S.H."/>
            <person name="Price C.W."/>
        </authorList>
    </citation>
    <scope>NUCLEOTIDE SEQUENCE [GENOMIC DNA]</scope>
    <source>
        <strain>168 / Marburg / ATCC 6051 / DSM 10 / JCM 1465 / NBRC 13719 / NCIMB 3610 / NRRL NRS-744 / VKM B-501</strain>
    </source>
</reference>
<reference key="3">
    <citation type="journal article" date="1997" name="Nature">
        <title>The complete genome sequence of the Gram-positive bacterium Bacillus subtilis.</title>
        <authorList>
            <person name="Kunst F."/>
            <person name="Ogasawara N."/>
            <person name="Moszer I."/>
            <person name="Albertini A.M."/>
            <person name="Alloni G."/>
            <person name="Azevedo V."/>
            <person name="Bertero M.G."/>
            <person name="Bessieres P."/>
            <person name="Bolotin A."/>
            <person name="Borchert S."/>
            <person name="Borriss R."/>
            <person name="Boursier L."/>
            <person name="Brans A."/>
            <person name="Braun M."/>
            <person name="Brignell S.C."/>
            <person name="Bron S."/>
            <person name="Brouillet S."/>
            <person name="Bruschi C.V."/>
            <person name="Caldwell B."/>
            <person name="Capuano V."/>
            <person name="Carter N.M."/>
            <person name="Choi S.-K."/>
            <person name="Codani J.-J."/>
            <person name="Connerton I.F."/>
            <person name="Cummings N.J."/>
            <person name="Daniel R.A."/>
            <person name="Denizot F."/>
            <person name="Devine K.M."/>
            <person name="Duesterhoeft A."/>
            <person name="Ehrlich S.D."/>
            <person name="Emmerson P.T."/>
            <person name="Entian K.-D."/>
            <person name="Errington J."/>
            <person name="Fabret C."/>
            <person name="Ferrari E."/>
            <person name="Foulger D."/>
            <person name="Fritz C."/>
            <person name="Fujita M."/>
            <person name="Fujita Y."/>
            <person name="Fuma S."/>
            <person name="Galizzi A."/>
            <person name="Galleron N."/>
            <person name="Ghim S.-Y."/>
            <person name="Glaser P."/>
            <person name="Goffeau A."/>
            <person name="Golightly E.J."/>
            <person name="Grandi G."/>
            <person name="Guiseppi G."/>
            <person name="Guy B.J."/>
            <person name="Haga K."/>
            <person name="Haiech J."/>
            <person name="Harwood C.R."/>
            <person name="Henaut A."/>
            <person name="Hilbert H."/>
            <person name="Holsappel S."/>
            <person name="Hosono S."/>
            <person name="Hullo M.-F."/>
            <person name="Itaya M."/>
            <person name="Jones L.-M."/>
            <person name="Joris B."/>
            <person name="Karamata D."/>
            <person name="Kasahara Y."/>
            <person name="Klaerr-Blanchard M."/>
            <person name="Klein C."/>
            <person name="Kobayashi Y."/>
            <person name="Koetter P."/>
            <person name="Koningstein G."/>
            <person name="Krogh S."/>
            <person name="Kumano M."/>
            <person name="Kurita K."/>
            <person name="Lapidus A."/>
            <person name="Lardinois S."/>
            <person name="Lauber J."/>
            <person name="Lazarevic V."/>
            <person name="Lee S.-M."/>
            <person name="Levine A."/>
            <person name="Liu H."/>
            <person name="Masuda S."/>
            <person name="Mauel C."/>
            <person name="Medigue C."/>
            <person name="Medina N."/>
            <person name="Mellado R.P."/>
            <person name="Mizuno M."/>
            <person name="Moestl D."/>
            <person name="Nakai S."/>
            <person name="Noback M."/>
            <person name="Noone D."/>
            <person name="O'Reilly M."/>
            <person name="Ogawa K."/>
            <person name="Ogiwara A."/>
            <person name="Oudega B."/>
            <person name="Park S.-H."/>
            <person name="Parro V."/>
            <person name="Pohl T.M."/>
            <person name="Portetelle D."/>
            <person name="Porwollik S."/>
            <person name="Prescott A.M."/>
            <person name="Presecan E."/>
            <person name="Pujic P."/>
            <person name="Purnelle B."/>
            <person name="Rapoport G."/>
            <person name="Rey M."/>
            <person name="Reynolds S."/>
            <person name="Rieger M."/>
            <person name="Rivolta C."/>
            <person name="Rocha E."/>
            <person name="Roche B."/>
            <person name="Rose M."/>
            <person name="Sadaie Y."/>
            <person name="Sato T."/>
            <person name="Scanlan E."/>
            <person name="Schleich S."/>
            <person name="Schroeter R."/>
            <person name="Scoffone F."/>
            <person name="Sekiguchi J."/>
            <person name="Sekowska A."/>
            <person name="Seror S.J."/>
            <person name="Serror P."/>
            <person name="Shin B.-S."/>
            <person name="Soldo B."/>
            <person name="Sorokin A."/>
            <person name="Tacconi E."/>
            <person name="Takagi T."/>
            <person name="Takahashi H."/>
            <person name="Takemaru K."/>
            <person name="Takeuchi M."/>
            <person name="Tamakoshi A."/>
            <person name="Tanaka T."/>
            <person name="Terpstra P."/>
            <person name="Tognoni A."/>
            <person name="Tosato V."/>
            <person name="Uchiyama S."/>
            <person name="Vandenbol M."/>
            <person name="Vannier F."/>
            <person name="Vassarotti A."/>
            <person name="Viari A."/>
            <person name="Wambutt R."/>
            <person name="Wedler E."/>
            <person name="Wedler H."/>
            <person name="Weitzenegger T."/>
            <person name="Winters P."/>
            <person name="Wipat A."/>
            <person name="Yamamoto H."/>
            <person name="Yamane K."/>
            <person name="Yasumoto K."/>
            <person name="Yata K."/>
            <person name="Yoshida K."/>
            <person name="Yoshikawa H.-F."/>
            <person name="Zumstein E."/>
            <person name="Yoshikawa H."/>
            <person name="Danchin A."/>
        </authorList>
    </citation>
    <scope>NUCLEOTIDE SEQUENCE [LARGE SCALE GENOMIC DNA]</scope>
    <source>
        <strain>168</strain>
    </source>
</reference>
<reference evidence="3 4" key="4">
    <citation type="journal article" date="2018" name="Proc. Natl. Acad. Sci. U.S.A.">
        <title>Structural basis for antibiotic resistance mediated by the Bacillus subtilis ABCF ATPase VmlR.</title>
        <authorList>
            <person name="Crowe-McAuliffe C."/>
            <person name="Graf M."/>
            <person name="Huter P."/>
            <person name="Takada H."/>
            <person name="Abdelshahid M."/>
            <person name="Novacek J."/>
            <person name="Murina V."/>
            <person name="Atkinson G.C."/>
            <person name="Hauryliuk V."/>
            <person name="Wilson D.N."/>
        </authorList>
    </citation>
    <scope>STRUCTURE BY ELECTRON MICROSCOPY (3.10 ANGSTROMS) OF 1-66 WITH AND WITHOUT VIRGINIAMYCIN M</scope>
    <scope>SUBUNIT</scope>
</reference>
<dbReference type="EMBL" id="X15664">
    <property type="protein sequence ID" value="CAA33699.1"/>
    <property type="molecule type" value="Genomic_DNA"/>
</dbReference>
<dbReference type="EMBL" id="L47971">
    <property type="protein sequence ID" value="AAB06807.1"/>
    <property type="molecule type" value="Genomic_DNA"/>
</dbReference>
<dbReference type="EMBL" id="AL009126">
    <property type="protein sequence ID" value="CAB11900.1"/>
    <property type="molecule type" value="Genomic_DNA"/>
</dbReference>
<dbReference type="PIR" id="S05990">
    <property type="entry name" value="R5BS2L"/>
</dbReference>
<dbReference type="RefSeq" id="NP_388005.1">
    <property type="nucleotide sequence ID" value="NC_000964.3"/>
</dbReference>
<dbReference type="RefSeq" id="WP_003156482.1">
    <property type="nucleotide sequence ID" value="NZ_OZ025638.1"/>
</dbReference>
<dbReference type="PDB" id="3J3V">
    <property type="method" value="EM"/>
    <property type="resolution" value="13.30 A"/>
    <property type="chains" value="X=1-66"/>
</dbReference>
<dbReference type="PDB" id="3J3W">
    <property type="method" value="EM"/>
    <property type="resolution" value="10.70 A"/>
    <property type="chains" value="X=1-66"/>
</dbReference>
<dbReference type="PDB" id="3J9W">
    <property type="method" value="EM"/>
    <property type="resolution" value="3.90 A"/>
    <property type="chains" value="B1=1-66"/>
</dbReference>
<dbReference type="PDB" id="5NJT">
    <property type="method" value="EM"/>
    <property type="resolution" value="3.80 A"/>
    <property type="chains" value="v=1-65"/>
</dbReference>
<dbReference type="PDB" id="6HA1">
    <property type="method" value="EM"/>
    <property type="resolution" value="3.10 A"/>
    <property type="chains" value="Y=1-66"/>
</dbReference>
<dbReference type="PDB" id="6HA8">
    <property type="method" value="EM"/>
    <property type="resolution" value="3.50 A"/>
    <property type="chains" value="Y=1-66"/>
</dbReference>
<dbReference type="PDB" id="6HTQ">
    <property type="method" value="EM"/>
    <property type="resolution" value="4.50 A"/>
    <property type="chains" value="X=1-65"/>
</dbReference>
<dbReference type="PDB" id="6PPF">
    <property type="method" value="EM"/>
    <property type="resolution" value="3.40 A"/>
    <property type="chains" value="Y=1-66"/>
</dbReference>
<dbReference type="PDB" id="6PPK">
    <property type="method" value="EM"/>
    <property type="resolution" value="4.40 A"/>
    <property type="chains" value="Y=1-66"/>
</dbReference>
<dbReference type="PDB" id="6PVK">
    <property type="method" value="EM"/>
    <property type="resolution" value="3.40 A"/>
    <property type="chains" value="Y=1-66"/>
</dbReference>
<dbReference type="PDB" id="6TNN">
    <property type="method" value="EM"/>
    <property type="resolution" value="3.07 A"/>
    <property type="chains" value="v=1-66"/>
</dbReference>
<dbReference type="PDB" id="6TPQ">
    <property type="method" value="EM"/>
    <property type="resolution" value="3.07 A"/>
    <property type="chains" value="v=1-66"/>
</dbReference>
<dbReference type="PDB" id="7AQC">
    <property type="method" value="EM"/>
    <property type="resolution" value="2.99 A"/>
    <property type="chains" value="i=1-66"/>
</dbReference>
<dbReference type="PDB" id="7AQD">
    <property type="method" value="EM"/>
    <property type="resolution" value="3.10 A"/>
    <property type="chains" value="i=1-66"/>
</dbReference>
<dbReference type="PDB" id="7AS8">
    <property type="method" value="EM"/>
    <property type="resolution" value="2.90 A"/>
    <property type="chains" value="c=1-66"/>
</dbReference>
<dbReference type="PDB" id="7AS9">
    <property type="method" value="EM"/>
    <property type="resolution" value="3.50 A"/>
    <property type="chains" value="c=1-66"/>
</dbReference>
<dbReference type="PDB" id="7O5B">
    <property type="method" value="EM"/>
    <property type="resolution" value="3.33 A"/>
    <property type="chains" value="w=1-66"/>
</dbReference>
<dbReference type="PDB" id="7OPE">
    <property type="method" value="EM"/>
    <property type="resolution" value="3.20 A"/>
    <property type="chains" value="c=1-66"/>
</dbReference>
<dbReference type="PDB" id="7QGU">
    <property type="method" value="EM"/>
    <property type="resolution" value="4.75 A"/>
    <property type="chains" value="Z=1-66"/>
</dbReference>
<dbReference type="PDB" id="7QH4">
    <property type="method" value="EM"/>
    <property type="resolution" value="5.45 A"/>
    <property type="chains" value="Z=1-66"/>
</dbReference>
<dbReference type="PDB" id="7QV1">
    <property type="method" value="EM"/>
    <property type="resolution" value="3.50 A"/>
    <property type="chains" value="Y=1-66"/>
</dbReference>
<dbReference type="PDB" id="7QV2">
    <property type="method" value="EM"/>
    <property type="resolution" value="3.50 A"/>
    <property type="chains" value="Y=1-66"/>
</dbReference>
<dbReference type="PDB" id="7QV3">
    <property type="method" value="EM"/>
    <property type="resolution" value="5.14 A"/>
    <property type="chains" value="Y=1-66"/>
</dbReference>
<dbReference type="PDB" id="7S9U">
    <property type="method" value="EM"/>
    <property type="resolution" value="3.20 A"/>
    <property type="chains" value="Y=1-66"/>
</dbReference>
<dbReference type="PDB" id="7SAE">
    <property type="method" value="EM"/>
    <property type="resolution" value="3.00 A"/>
    <property type="chains" value="Y=1-66"/>
</dbReference>
<dbReference type="PDB" id="8BUU">
    <property type="method" value="EM"/>
    <property type="resolution" value="2.90 A"/>
    <property type="chains" value="Y=1-66"/>
</dbReference>
<dbReference type="PDB" id="8QCQ">
    <property type="method" value="EM"/>
    <property type="resolution" value="2.30 A"/>
    <property type="chains" value="Y=1-66"/>
</dbReference>
<dbReference type="PDB" id="8QPP">
    <property type="method" value="EM"/>
    <property type="resolution" value="3.40 A"/>
    <property type="chains" value="w=1-65"/>
</dbReference>
<dbReference type="PDB" id="8R55">
    <property type="method" value="EM"/>
    <property type="resolution" value="3.57 A"/>
    <property type="chains" value="w=1-65"/>
</dbReference>
<dbReference type="PDB" id="8S1P">
    <property type="method" value="EM"/>
    <property type="resolution" value="1.96 A"/>
    <property type="chains" value="Y=1-66"/>
</dbReference>
<dbReference type="PDB" id="8S1U">
    <property type="method" value="EM"/>
    <property type="resolution" value="3.40 A"/>
    <property type="chains" value="Y=1-66"/>
</dbReference>
<dbReference type="PDB" id="9BS0">
    <property type="method" value="EM"/>
    <property type="resolution" value="3.30 A"/>
    <property type="chains" value="R=1-66"/>
</dbReference>
<dbReference type="PDB" id="9BSL">
    <property type="method" value="EM"/>
    <property type="resolution" value="3.10 A"/>
    <property type="chains" value="R=1-66"/>
</dbReference>
<dbReference type="PDB" id="9BSS">
    <property type="method" value="EM"/>
    <property type="resolution" value="3.10 A"/>
    <property type="chains" value="R=1-66"/>
</dbReference>
<dbReference type="PDBsum" id="3J3V"/>
<dbReference type="PDBsum" id="3J3W"/>
<dbReference type="PDBsum" id="3J9W"/>
<dbReference type="PDBsum" id="5NJT"/>
<dbReference type="PDBsum" id="6HA1"/>
<dbReference type="PDBsum" id="6HA8"/>
<dbReference type="PDBsum" id="6HTQ"/>
<dbReference type="PDBsum" id="6PPF"/>
<dbReference type="PDBsum" id="6PPK"/>
<dbReference type="PDBsum" id="6PVK"/>
<dbReference type="PDBsum" id="6TNN"/>
<dbReference type="PDBsum" id="6TPQ"/>
<dbReference type="PDBsum" id="7AQC"/>
<dbReference type="PDBsum" id="7AQD"/>
<dbReference type="PDBsum" id="7AS8"/>
<dbReference type="PDBsum" id="7AS9"/>
<dbReference type="PDBsum" id="7O5B"/>
<dbReference type="PDBsum" id="7OPE"/>
<dbReference type="PDBsum" id="7QGU"/>
<dbReference type="PDBsum" id="7QH4"/>
<dbReference type="PDBsum" id="7QV1"/>
<dbReference type="PDBsum" id="7QV2"/>
<dbReference type="PDBsum" id="7QV3"/>
<dbReference type="PDBsum" id="7S9U"/>
<dbReference type="PDBsum" id="7SAE"/>
<dbReference type="PDBsum" id="8BUU"/>
<dbReference type="PDBsum" id="8QCQ"/>
<dbReference type="PDBsum" id="8QPP"/>
<dbReference type="PDBsum" id="8R55"/>
<dbReference type="PDBsum" id="8S1P"/>
<dbReference type="PDBsum" id="8S1U"/>
<dbReference type="PDBsum" id="9BS0"/>
<dbReference type="PDBsum" id="9BSL"/>
<dbReference type="PDBsum" id="9BSS"/>
<dbReference type="EMDB" id="EMD-0176"/>
<dbReference type="EMDB" id="EMD-0177"/>
<dbReference type="EMDB" id="EMD-0270"/>
<dbReference type="EMDB" id="EMD-10535"/>
<dbReference type="EMDB" id="EMD-10543"/>
<dbReference type="EMDB" id="EMD-11862"/>
<dbReference type="EMDB" id="EMD-11864"/>
<dbReference type="EMDB" id="EMD-11889"/>
<dbReference type="EMDB" id="EMD-11890"/>
<dbReference type="EMDB" id="EMD-12734"/>
<dbReference type="EMDB" id="EMD-13017"/>
<dbReference type="EMDB" id="EMD-14157"/>
<dbReference type="EMDB" id="EMD-14158"/>
<dbReference type="EMDB" id="EMD-14159"/>
<dbReference type="EMDB" id="EMD-16246"/>
<dbReference type="EMDB" id="EMD-18332"/>
<dbReference type="EMDB" id="EMD-19638"/>
<dbReference type="EMDB" id="EMD-19641"/>
<dbReference type="EMDB" id="EMD-3656"/>
<dbReference type="EMDB" id="EMD-44849"/>
<dbReference type="EMDB" id="EMD-44869"/>
<dbReference type="EMDB" id="EMD-44871"/>
<dbReference type="SMR" id="P12873"/>
<dbReference type="FunCoup" id="P12873">
    <property type="interactions" value="429"/>
</dbReference>
<dbReference type="IntAct" id="P12873">
    <property type="interactions" value="1"/>
</dbReference>
<dbReference type="STRING" id="224308.BSU01240"/>
<dbReference type="jPOST" id="P12873"/>
<dbReference type="PaxDb" id="224308-BSU01240"/>
<dbReference type="EnsemblBacteria" id="CAB11900">
    <property type="protein sequence ID" value="CAB11900"/>
    <property type="gene ID" value="BSU_01240"/>
</dbReference>
<dbReference type="GeneID" id="93079288"/>
<dbReference type="GeneID" id="936801"/>
<dbReference type="KEGG" id="bsu:BSU01240"/>
<dbReference type="PATRIC" id="fig|224308.179.peg.127"/>
<dbReference type="eggNOG" id="COG0255">
    <property type="taxonomic scope" value="Bacteria"/>
</dbReference>
<dbReference type="InParanoid" id="P12873"/>
<dbReference type="OrthoDB" id="9815192at2"/>
<dbReference type="PhylomeDB" id="P12873"/>
<dbReference type="BioCyc" id="BSUB:BSU01240-MONOMER"/>
<dbReference type="EvolutionaryTrace" id="P12873"/>
<dbReference type="PRO" id="PR:P12873"/>
<dbReference type="Proteomes" id="UP000001570">
    <property type="component" value="Chromosome"/>
</dbReference>
<dbReference type="GO" id="GO:0022625">
    <property type="term" value="C:cytosolic large ribosomal subunit"/>
    <property type="evidence" value="ECO:0000318"/>
    <property type="project" value="GO_Central"/>
</dbReference>
<dbReference type="GO" id="GO:0003735">
    <property type="term" value="F:structural constituent of ribosome"/>
    <property type="evidence" value="ECO:0007669"/>
    <property type="project" value="InterPro"/>
</dbReference>
<dbReference type="GO" id="GO:0006412">
    <property type="term" value="P:translation"/>
    <property type="evidence" value="ECO:0007669"/>
    <property type="project" value="UniProtKB-UniRule"/>
</dbReference>
<dbReference type="CDD" id="cd00427">
    <property type="entry name" value="Ribosomal_L29_HIP"/>
    <property type="match status" value="1"/>
</dbReference>
<dbReference type="FunFam" id="1.10.287.310:FF:000001">
    <property type="entry name" value="50S ribosomal protein L29"/>
    <property type="match status" value="1"/>
</dbReference>
<dbReference type="Gene3D" id="1.10.287.310">
    <property type="match status" value="1"/>
</dbReference>
<dbReference type="HAMAP" id="MF_00374">
    <property type="entry name" value="Ribosomal_uL29"/>
    <property type="match status" value="1"/>
</dbReference>
<dbReference type="InterPro" id="IPR050063">
    <property type="entry name" value="Ribosomal_protein_uL29"/>
</dbReference>
<dbReference type="InterPro" id="IPR001854">
    <property type="entry name" value="Ribosomal_uL29"/>
</dbReference>
<dbReference type="InterPro" id="IPR018254">
    <property type="entry name" value="Ribosomal_uL29_CS"/>
</dbReference>
<dbReference type="InterPro" id="IPR036049">
    <property type="entry name" value="Ribosomal_uL29_sf"/>
</dbReference>
<dbReference type="NCBIfam" id="TIGR00012">
    <property type="entry name" value="L29"/>
    <property type="match status" value="1"/>
</dbReference>
<dbReference type="PANTHER" id="PTHR10916">
    <property type="entry name" value="60S RIBOSOMAL PROTEIN L35/50S RIBOSOMAL PROTEIN L29"/>
    <property type="match status" value="1"/>
</dbReference>
<dbReference type="PANTHER" id="PTHR10916:SF0">
    <property type="entry name" value="LARGE RIBOSOMAL SUBUNIT PROTEIN UL29C"/>
    <property type="match status" value="1"/>
</dbReference>
<dbReference type="Pfam" id="PF00831">
    <property type="entry name" value="Ribosomal_L29"/>
    <property type="match status" value="1"/>
</dbReference>
<dbReference type="SUPFAM" id="SSF46561">
    <property type="entry name" value="Ribosomal protein L29 (L29p)"/>
    <property type="match status" value="1"/>
</dbReference>
<dbReference type="PROSITE" id="PS00579">
    <property type="entry name" value="RIBOSOMAL_L29"/>
    <property type="match status" value="1"/>
</dbReference>
<accession>P12873</accession>
<proteinExistence type="evidence at protein level"/>
<organism>
    <name type="scientific">Bacillus subtilis (strain 168)</name>
    <dbReference type="NCBI Taxonomy" id="224308"/>
    <lineage>
        <taxon>Bacteria</taxon>
        <taxon>Bacillati</taxon>
        <taxon>Bacillota</taxon>
        <taxon>Bacilli</taxon>
        <taxon>Bacillales</taxon>
        <taxon>Bacillaceae</taxon>
        <taxon>Bacillus</taxon>
    </lineage>
</organism>
<evidence type="ECO:0000269" key="1">
    <source>
    </source>
</evidence>
<evidence type="ECO:0000305" key="2"/>
<evidence type="ECO:0007744" key="3">
    <source>
        <dbReference type="PDB" id="6HA1"/>
    </source>
</evidence>
<evidence type="ECO:0007744" key="4">
    <source>
        <dbReference type="PDB" id="6HA8"/>
    </source>
</evidence>
<evidence type="ECO:0007829" key="5">
    <source>
        <dbReference type="PDB" id="8S1P"/>
    </source>
</evidence>
<feature type="chain" id="PRO_0000130355" description="Large ribosomal subunit protein uL29">
    <location>
        <begin position="1"/>
        <end position="66"/>
    </location>
</feature>
<feature type="helix" evidence="5">
    <location>
        <begin position="3"/>
        <end position="8"/>
    </location>
</feature>
<feature type="helix" evidence="5">
    <location>
        <begin position="11"/>
        <end position="33"/>
    </location>
</feature>
<feature type="helix" evidence="5">
    <location>
        <begin position="41"/>
        <end position="64"/>
    </location>
</feature>
<sequence>MKANEIRDLTTAEIEQKVKSLKEELFNLRFQLATGQLENTARIREVRKAIARMKTVIREREIAANK</sequence>